<evidence type="ECO:0000250" key="1">
    <source>
        <dbReference type="UniProtKB" id="D2ZZC1"/>
    </source>
</evidence>
<evidence type="ECO:0000255" key="2"/>
<evidence type="ECO:0000269" key="3">
    <source>
    </source>
</evidence>
<evidence type="ECO:0000305" key="4"/>
<evidence type="ECO:0000305" key="5">
    <source>
    </source>
</evidence>
<evidence type="ECO:0000305" key="6">
    <source>
    </source>
</evidence>
<reference key="1">
    <citation type="journal article" date="1996" name="DNA Res.">
        <title>A 718-kb DNA sequence of the Escherichia coli K-12 genome corresponding to the 12.7-28.0 min region on the linkage map.</title>
        <authorList>
            <person name="Oshima T."/>
            <person name="Aiba H."/>
            <person name="Baba T."/>
            <person name="Fujita K."/>
            <person name="Hayashi K."/>
            <person name="Honjo A."/>
            <person name="Ikemoto K."/>
            <person name="Inada T."/>
            <person name="Itoh T."/>
            <person name="Kajihara M."/>
            <person name="Kanai K."/>
            <person name="Kashimoto K."/>
            <person name="Kimura S."/>
            <person name="Kitagawa M."/>
            <person name="Makino K."/>
            <person name="Masuda S."/>
            <person name="Miki T."/>
            <person name="Mizobuchi K."/>
            <person name="Mori H."/>
            <person name="Motomura K."/>
            <person name="Nakamura Y."/>
            <person name="Nashimoto H."/>
            <person name="Nishio Y."/>
            <person name="Saito N."/>
            <person name="Sampei G."/>
            <person name="Seki Y."/>
            <person name="Tagami H."/>
            <person name="Takemoto K."/>
            <person name="Wada C."/>
            <person name="Yamamoto Y."/>
            <person name="Yano M."/>
            <person name="Horiuchi T."/>
        </authorList>
    </citation>
    <scope>NUCLEOTIDE SEQUENCE [GENOMIC DNA]</scope>
    <source>
        <strain>K12</strain>
    </source>
</reference>
<reference key="2">
    <citation type="journal article" date="1997" name="Science">
        <title>The complete genome sequence of Escherichia coli K-12.</title>
        <authorList>
            <person name="Blattner F.R."/>
            <person name="Plunkett G. III"/>
            <person name="Bloch C.A."/>
            <person name="Perna N.T."/>
            <person name="Burland V."/>
            <person name="Riley M."/>
            <person name="Collado-Vides J."/>
            <person name="Glasner J.D."/>
            <person name="Rode C.K."/>
            <person name="Mayhew G.F."/>
            <person name="Gregor J."/>
            <person name="Davis N.W."/>
            <person name="Kirkpatrick H.A."/>
            <person name="Goeden M.A."/>
            <person name="Rose D.J."/>
            <person name="Mau B."/>
            <person name="Shao Y."/>
        </authorList>
    </citation>
    <scope>NUCLEOTIDE SEQUENCE [LARGE SCALE GENOMIC DNA]</scope>
    <source>
        <strain>K12 / MG1655 / ATCC 47076</strain>
    </source>
</reference>
<reference key="3">
    <citation type="journal article" date="2006" name="Mol. Syst. Biol.">
        <title>Highly accurate genome sequences of Escherichia coli K-12 strains MG1655 and W3110.</title>
        <authorList>
            <person name="Hayashi K."/>
            <person name="Morooka N."/>
            <person name="Yamamoto Y."/>
            <person name="Fujita K."/>
            <person name="Isono K."/>
            <person name="Choi S."/>
            <person name="Ohtsubo E."/>
            <person name="Baba T."/>
            <person name="Wanner B.L."/>
            <person name="Mori H."/>
            <person name="Horiuchi T."/>
        </authorList>
    </citation>
    <scope>NUCLEOTIDE SEQUENCE [LARGE SCALE GENOMIC DNA]</scope>
    <source>
        <strain>K12 / W3110 / ATCC 27325 / DSM 5911</strain>
    </source>
</reference>
<reference key="4">
    <citation type="journal article" date="1988" name="Eur. J. Biochem.">
        <title>Molecular biology of pyridine nucleotide biosynthesis in Escherichia coli. Cloning and characterization of quinolinate synthesis genes nadA and nadB.</title>
        <authorList>
            <person name="Flachmann R."/>
            <person name="Kunz N."/>
            <person name="Seifert J."/>
            <person name="Guetlich M."/>
            <person name="Wientjes F.-J."/>
            <person name="Laeufer A."/>
            <person name="Gassen H.G."/>
        </authorList>
    </citation>
    <scope>NUCLEOTIDE SEQUENCE [GENOMIC DNA] OF 1-66</scope>
</reference>
<reference key="5">
    <citation type="journal article" date="1990" name="J. Bacteriol.">
        <title>Regulation of NAD metabolism in Salmonella typhimurium: molecular sequence analysis of the bifunctional nadR regulator and the nadA-pnuC operon.</title>
        <authorList>
            <person name="Foster J.W."/>
            <person name="Park Y.K."/>
            <person name="Penfound T."/>
            <person name="Fenger T."/>
            <person name="Spector M.P."/>
        </authorList>
    </citation>
    <scope>IDENTIFICATION</scope>
</reference>
<reference key="6">
    <citation type="journal article" date="2004" name="Antimicrob. Agents Chemother.">
        <title>PnuC and the utilization of the nicotinamide riboside analog 3-aminopyridine in Haemophilus influenzae.</title>
        <authorList>
            <person name="Sauer E."/>
            <person name="Merdanovic M."/>
            <person name="Mortimer A.P."/>
            <person name="Bringmann G."/>
            <person name="Reidl J."/>
        </authorList>
    </citation>
    <scope>FUNCTION</scope>
    <scope>SUBSTRATE SPECIFICITY</scope>
    <source>
        <strain>K12 / C600 / CR34 / ATCC 23724 / DSM 3925 / LMG 3041 / NCIB 10222</strain>
    </source>
</reference>
<reference key="7">
    <citation type="journal article" date="2005" name="Science">
        <title>Global topology analysis of the Escherichia coli inner membrane proteome.</title>
        <authorList>
            <person name="Daley D.O."/>
            <person name="Rapp M."/>
            <person name="Granseth E."/>
            <person name="Melen K."/>
            <person name="Drew D."/>
            <person name="von Heijne G."/>
        </authorList>
    </citation>
    <scope>TOPOLOGY [LARGE SCALE ANALYSIS]</scope>
    <source>
        <strain>K12 / MG1655 / ATCC 47076</strain>
    </source>
</reference>
<proteinExistence type="evidence at protein level"/>
<feature type="chain" id="PRO_0000058488" description="Nicotinamide riboside transporter PnuC">
    <location>
        <begin position="1"/>
        <end position="239"/>
    </location>
</feature>
<feature type="topological domain" description="Cytoplasmic" evidence="2">
    <location>
        <begin position="1"/>
        <end position="21"/>
    </location>
</feature>
<feature type="transmembrane region" description="Helical" evidence="2">
    <location>
        <begin position="22"/>
        <end position="42"/>
    </location>
</feature>
<feature type="topological domain" description="Periplasmic" evidence="2">
    <location>
        <begin position="43"/>
        <end position="48"/>
    </location>
</feature>
<feature type="transmembrane region" description="Helical" evidence="2">
    <location>
        <begin position="49"/>
        <end position="68"/>
    </location>
</feature>
<feature type="topological domain" description="Cytoplasmic" evidence="2">
    <location>
        <begin position="69"/>
        <end position="71"/>
    </location>
</feature>
<feature type="transmembrane region" description="Helical" evidence="2">
    <location>
        <begin position="72"/>
        <end position="89"/>
    </location>
</feature>
<feature type="topological domain" description="Periplasmic" evidence="2">
    <location>
        <begin position="90"/>
        <end position="109"/>
    </location>
</feature>
<feature type="transmembrane region" description="Helical" evidence="2">
    <location>
        <begin position="110"/>
        <end position="127"/>
    </location>
</feature>
<feature type="topological domain" description="Cytoplasmic" evidence="2">
    <location>
        <begin position="128"/>
        <end position="157"/>
    </location>
</feature>
<feature type="transmembrane region" description="Helical" evidence="2">
    <location>
        <begin position="158"/>
        <end position="177"/>
    </location>
</feature>
<feature type="topological domain" description="Periplasmic" evidence="2">
    <location>
        <begin position="178"/>
        <end position="183"/>
    </location>
</feature>
<feature type="transmembrane region" description="Helical" evidence="2">
    <location>
        <begin position="184"/>
        <end position="206"/>
    </location>
</feature>
<feature type="topological domain" description="Cytoplasmic" evidence="6">
    <location>
        <begin position="207"/>
        <end position="239"/>
    </location>
</feature>
<feature type="binding site" evidence="1">
    <location>
        <position position="188"/>
    </location>
    <ligand>
        <name>beta-nicotinamide D-riboside</name>
        <dbReference type="ChEBI" id="CHEBI:15927"/>
    </ligand>
</feature>
<feature type="binding site" evidence="1">
    <location>
        <position position="192"/>
    </location>
    <ligand>
        <name>beta-nicotinamide D-riboside</name>
        <dbReference type="ChEBI" id="CHEBI:15927"/>
    </ligand>
</feature>
<feature type="sequence conflict" description="In Ref. 4." evidence="4" ref="4">
    <original>VQ</original>
    <variation>TH</variation>
    <location>
        <begin position="6"/>
        <end position="7"/>
    </location>
</feature>
<feature type="sequence conflict" description="In Ref. 4." evidence="4" ref="4">
    <original>V</original>
    <variation>I</variation>
    <location>
        <position position="11"/>
    </location>
</feature>
<name>PNUC_ECOLI</name>
<gene>
    <name type="primary">pnuC</name>
    <name type="ordered locus">b0751</name>
    <name type="ordered locus">JW0734</name>
</gene>
<organism>
    <name type="scientific">Escherichia coli (strain K12)</name>
    <dbReference type="NCBI Taxonomy" id="83333"/>
    <lineage>
        <taxon>Bacteria</taxon>
        <taxon>Pseudomonadati</taxon>
        <taxon>Pseudomonadota</taxon>
        <taxon>Gammaproteobacteria</taxon>
        <taxon>Enterobacterales</taxon>
        <taxon>Enterobacteriaceae</taxon>
        <taxon>Escherichia</taxon>
    </lineage>
</organism>
<sequence length="239" mass="26996">MDFFSVQNILVHIPIGAGGYDLSWIEAVGTIAGLLCIGLASLEKISNYFFGLINVTLFGIIFFQIQLYASLLLQVFFFAANIYGWYAWSRQTSQNEAELKIRWLPLPKALSWLAVCVVSIGLMTVFINPVFAFLTRVAVMIMQALGLQVVMPELQPDAFPFWDSCMMVLSIVAMILMTRKYVENWLLWVIINVISVVIFALQGVYAMSLEYIILTFIALNGSRMWINSARERGSRALSH</sequence>
<accession>P0AFK2</accession>
<accession>P31215</accession>
<accession>P77227</accession>
<comment type="function">
    <text evidence="3">Required for nicotinamide riboside transport across the inner membrane.</text>
</comment>
<comment type="subcellular location">
    <subcellularLocation>
        <location evidence="3">Cell inner membrane</location>
        <topology evidence="5 6">Multi-pass membrane protein</topology>
    </subcellularLocation>
</comment>
<comment type="induction">
    <text>Repressed by NadR.</text>
</comment>
<comment type="similarity">
    <text evidence="4">Belongs to the nicotinamide ribonucleoside (NR) uptake permease (TC 4.B.1) family.</text>
</comment>
<dbReference type="EMBL" id="U00096">
    <property type="protein sequence ID" value="AAC73838.1"/>
    <property type="molecule type" value="Genomic_DNA"/>
</dbReference>
<dbReference type="EMBL" id="AP009048">
    <property type="protein sequence ID" value="BAA35413.1"/>
    <property type="molecule type" value="Genomic_DNA"/>
</dbReference>
<dbReference type="EMBL" id="X12713">
    <property type="status" value="NOT_ANNOTATED_CDS"/>
    <property type="molecule type" value="Genomic_DNA"/>
</dbReference>
<dbReference type="PIR" id="G64810">
    <property type="entry name" value="G64810"/>
</dbReference>
<dbReference type="RefSeq" id="NP_415272.1">
    <property type="nucleotide sequence ID" value="NC_000913.3"/>
</dbReference>
<dbReference type="RefSeq" id="WP_000345410.1">
    <property type="nucleotide sequence ID" value="NZ_STEB01000028.1"/>
</dbReference>
<dbReference type="SMR" id="P0AFK2"/>
<dbReference type="BioGRID" id="4259938">
    <property type="interactions" value="8"/>
</dbReference>
<dbReference type="FunCoup" id="P0AFK2">
    <property type="interactions" value="88"/>
</dbReference>
<dbReference type="STRING" id="511145.b0751"/>
<dbReference type="PaxDb" id="511145-b0751"/>
<dbReference type="EnsemblBacteria" id="AAC73838">
    <property type="protein sequence ID" value="AAC73838"/>
    <property type="gene ID" value="b0751"/>
</dbReference>
<dbReference type="GeneID" id="93776730"/>
<dbReference type="GeneID" id="945350"/>
<dbReference type="KEGG" id="ecj:JW0734"/>
<dbReference type="KEGG" id="eco:b0751"/>
<dbReference type="KEGG" id="ecoc:C3026_03795"/>
<dbReference type="PATRIC" id="fig|1411691.4.peg.1528"/>
<dbReference type="EchoBASE" id="EB1651"/>
<dbReference type="eggNOG" id="COG3201">
    <property type="taxonomic scope" value="Bacteria"/>
</dbReference>
<dbReference type="HOGENOM" id="CLU_076589_1_0_6"/>
<dbReference type="InParanoid" id="P0AFK2"/>
<dbReference type="OMA" id="AYVAYQW"/>
<dbReference type="OrthoDB" id="9791248at2"/>
<dbReference type="PhylomeDB" id="P0AFK2"/>
<dbReference type="BioCyc" id="EcoCyc:PNUC-MONOMER"/>
<dbReference type="BioCyc" id="MetaCyc:PNUC-MONOMER"/>
<dbReference type="PRO" id="PR:P0AFK2"/>
<dbReference type="Proteomes" id="UP000000625">
    <property type="component" value="Chromosome"/>
</dbReference>
<dbReference type="GO" id="GO:0005886">
    <property type="term" value="C:plasma membrane"/>
    <property type="evidence" value="ECO:0000314"/>
    <property type="project" value="EcoCyc"/>
</dbReference>
<dbReference type="GO" id="GO:0034257">
    <property type="term" value="F:nicotinamide riboside transmembrane transporter activity"/>
    <property type="evidence" value="ECO:0000314"/>
    <property type="project" value="EcoCyc"/>
</dbReference>
<dbReference type="GO" id="GO:0034258">
    <property type="term" value="P:nicotinamide riboside transport"/>
    <property type="evidence" value="ECO:0000314"/>
    <property type="project" value="EcoCyc"/>
</dbReference>
<dbReference type="InterPro" id="IPR006419">
    <property type="entry name" value="NMN_transpt_PnuC"/>
</dbReference>
<dbReference type="NCBIfam" id="TIGR01528">
    <property type="entry name" value="NMN_trans_PnuC"/>
    <property type="match status" value="1"/>
</dbReference>
<dbReference type="NCBIfam" id="NF011926">
    <property type="entry name" value="PRK15397.1"/>
    <property type="match status" value="1"/>
</dbReference>
<dbReference type="PANTHER" id="PTHR36122">
    <property type="entry name" value="NICOTINAMIDE RIBOSIDE TRANSPORTER PNUC"/>
    <property type="match status" value="1"/>
</dbReference>
<dbReference type="PANTHER" id="PTHR36122:SF2">
    <property type="entry name" value="NICOTINAMIDE RIBOSIDE TRANSPORTER PNUC"/>
    <property type="match status" value="1"/>
</dbReference>
<dbReference type="Pfam" id="PF04973">
    <property type="entry name" value="NMN_transporter"/>
    <property type="match status" value="1"/>
</dbReference>
<protein>
    <recommendedName>
        <fullName>Nicotinamide riboside transporter PnuC</fullName>
    </recommendedName>
</protein>
<keyword id="KW-0997">Cell inner membrane</keyword>
<keyword id="KW-1003">Cell membrane</keyword>
<keyword id="KW-0472">Membrane</keyword>
<keyword id="KW-0520">NAD</keyword>
<keyword id="KW-1185">Reference proteome</keyword>
<keyword id="KW-0812">Transmembrane</keyword>
<keyword id="KW-1133">Transmembrane helix</keyword>
<keyword id="KW-0813">Transport</keyword>